<protein>
    <recommendedName>
        <fullName>UPF0324 membrane protein plu2856</fullName>
    </recommendedName>
</protein>
<name>Y2856_PHOLL</name>
<reference key="1">
    <citation type="journal article" date="2003" name="Nat. Biotechnol.">
        <title>The genome sequence of the entomopathogenic bacterium Photorhabdus luminescens.</title>
        <authorList>
            <person name="Duchaud E."/>
            <person name="Rusniok C."/>
            <person name="Frangeul L."/>
            <person name="Buchrieser C."/>
            <person name="Givaudan A."/>
            <person name="Taourit S."/>
            <person name="Bocs S."/>
            <person name="Boursaux-Eude C."/>
            <person name="Chandler M."/>
            <person name="Charles J.-F."/>
            <person name="Dassa E."/>
            <person name="Derose R."/>
            <person name="Derzelle S."/>
            <person name="Freyssinet G."/>
            <person name="Gaudriault S."/>
            <person name="Medigue C."/>
            <person name="Lanois A."/>
            <person name="Powell K."/>
            <person name="Siguier P."/>
            <person name="Vincent R."/>
            <person name="Wingate V."/>
            <person name="Zouine M."/>
            <person name="Glaser P."/>
            <person name="Boemare N."/>
            <person name="Danchin A."/>
            <person name="Kunst F."/>
        </authorList>
    </citation>
    <scope>NUCLEOTIDE SEQUENCE [LARGE SCALE GENOMIC DNA]</scope>
    <source>
        <strain>DSM 15139 / CIP 105565 / TT01</strain>
    </source>
</reference>
<gene>
    <name type="ordered locus">plu2856</name>
</gene>
<dbReference type="EMBL" id="BX571868">
    <property type="protein sequence ID" value="CAE15230.1"/>
    <property type="molecule type" value="Genomic_DNA"/>
</dbReference>
<dbReference type="RefSeq" id="WP_011147076.1">
    <property type="nucleotide sequence ID" value="NC_005126.1"/>
</dbReference>
<dbReference type="STRING" id="243265.plu2856"/>
<dbReference type="GeneID" id="48849118"/>
<dbReference type="KEGG" id="plu:plu2856"/>
<dbReference type="eggNOG" id="COG2855">
    <property type="taxonomic scope" value="Bacteria"/>
</dbReference>
<dbReference type="HOGENOM" id="CLU_033541_0_0_6"/>
<dbReference type="OrthoDB" id="9805703at2"/>
<dbReference type="Proteomes" id="UP000002514">
    <property type="component" value="Chromosome"/>
</dbReference>
<dbReference type="GO" id="GO:0005886">
    <property type="term" value="C:plasma membrane"/>
    <property type="evidence" value="ECO:0007669"/>
    <property type="project" value="UniProtKB-SubCell"/>
</dbReference>
<dbReference type="InterPro" id="IPR018383">
    <property type="entry name" value="UPF0324_pro"/>
</dbReference>
<dbReference type="InterPro" id="IPR004630">
    <property type="entry name" value="UPF0324_YeiH-like"/>
</dbReference>
<dbReference type="NCBIfam" id="TIGR00698">
    <property type="entry name" value="YeiH family putative sulfate export transporter"/>
    <property type="match status" value="1"/>
</dbReference>
<dbReference type="PANTHER" id="PTHR30106">
    <property type="entry name" value="INNER MEMBRANE PROTEIN YEIH-RELATED"/>
    <property type="match status" value="1"/>
</dbReference>
<dbReference type="PANTHER" id="PTHR30106:SF2">
    <property type="entry name" value="UPF0324 INNER MEMBRANE PROTEIN YEIH"/>
    <property type="match status" value="1"/>
</dbReference>
<dbReference type="Pfam" id="PF03601">
    <property type="entry name" value="Cons_hypoth698"/>
    <property type="match status" value="1"/>
</dbReference>
<feature type="chain" id="PRO_0000157436" description="UPF0324 membrane protein plu2856">
    <location>
        <begin position="1"/>
        <end position="360"/>
    </location>
</feature>
<feature type="transmembrane region" description="Helical" evidence="1">
    <location>
        <begin position="20"/>
        <end position="42"/>
    </location>
</feature>
<feature type="transmembrane region" description="Helical" evidence="1">
    <location>
        <begin position="47"/>
        <end position="69"/>
    </location>
</feature>
<feature type="transmembrane region" description="Helical" evidence="1">
    <location>
        <begin position="104"/>
        <end position="126"/>
    </location>
</feature>
<feature type="transmembrane region" description="Helical" evidence="1">
    <location>
        <begin position="136"/>
        <end position="155"/>
    </location>
</feature>
<feature type="transmembrane region" description="Helical" evidence="1">
    <location>
        <begin position="167"/>
        <end position="189"/>
    </location>
</feature>
<feature type="transmembrane region" description="Helical" evidence="1">
    <location>
        <begin position="239"/>
        <end position="256"/>
    </location>
</feature>
<feature type="transmembrane region" description="Helical" evidence="1">
    <location>
        <begin position="277"/>
        <end position="299"/>
    </location>
</feature>
<feature type="transmembrane region" description="Helical" evidence="1">
    <location>
        <begin position="304"/>
        <end position="326"/>
    </location>
</feature>
<feature type="transmembrane region" description="Helical" evidence="1">
    <location>
        <begin position="333"/>
        <end position="355"/>
    </location>
</feature>
<organism>
    <name type="scientific">Photorhabdus laumondii subsp. laumondii (strain DSM 15139 / CIP 105565 / TT01)</name>
    <name type="common">Photorhabdus luminescens subsp. laumondii</name>
    <dbReference type="NCBI Taxonomy" id="243265"/>
    <lineage>
        <taxon>Bacteria</taxon>
        <taxon>Pseudomonadati</taxon>
        <taxon>Pseudomonadota</taxon>
        <taxon>Gammaproteobacteria</taxon>
        <taxon>Enterobacterales</taxon>
        <taxon>Morganellaceae</taxon>
        <taxon>Photorhabdus</taxon>
    </lineage>
</organism>
<keyword id="KW-1003">Cell membrane</keyword>
<keyword id="KW-0472">Membrane</keyword>
<keyword id="KW-1185">Reference proteome</keyword>
<keyword id="KW-0812">Transmembrane</keyword>
<keyword id="KW-1133">Transmembrane helix</keyword>
<proteinExistence type="inferred from homology"/>
<sequence>MSDIHAKKFSKQSSIPGMKLIPGLILAAILTAISIYAGNIPWFINMGLGTLTLAILAGIIVGNTVYPLLKPYCDEGIHFSKHYLLRAGIILYGFRLTFQQIADVGITGLLIDAAMLSSTFFIAIWLGKSLFGLDQQTVILIGAGSSICGAAAIMATEPVVNAPASKVAVAVSTIVIFGTIAIFIYPWFYQLNEHYQWLPLTQETFGIFTGSTLHEVAQVVAVGHAISDQTENVAVISKMIRVMMLAPFLLLLSRYINHADTKNGRNHQEKTPITIPWFAVIFIAIAGFNSFNLLPAAIVNSLINIDTIMLTMAMGALGLTTHVSAIRQAGFKPILLALILFVWLMAGGLLINLGIQHLFG</sequence>
<accession>Q7N365</accession>
<comment type="subcellular location">
    <subcellularLocation>
        <location evidence="2">Cell membrane</location>
        <topology evidence="2">Multi-pass membrane protein</topology>
    </subcellularLocation>
</comment>
<comment type="similarity">
    <text evidence="2">Belongs to the UPF0324 family.</text>
</comment>
<evidence type="ECO:0000255" key="1"/>
<evidence type="ECO:0000305" key="2"/>